<name>DEF4_BRANA</name>
<keyword id="KW-0929">Antimicrobial</keyword>
<keyword id="KW-0903">Direct protein sequencing</keyword>
<keyword id="KW-1015">Disulfide bond</keyword>
<keyword id="KW-0295">Fungicide</keyword>
<keyword id="KW-0611">Plant defense</keyword>
<keyword id="KW-0964">Secreted</keyword>
<evidence type="ECO:0000250" key="1"/>
<evidence type="ECO:0000305" key="2"/>
<evidence type="ECO:0000305" key="3">
    <source>
    </source>
</evidence>
<accession>P80301</accession>
<sequence length="60" mass="6609">DSECLKEYGGDVGFGFCAPRIYPSFCVQRCRADKGALSGKCIWGQGSNVKCLCNFCRHEP</sequence>
<dbReference type="PIR" id="S43672">
    <property type="entry name" value="S43672"/>
</dbReference>
<dbReference type="SMR" id="P80301"/>
<dbReference type="MEROPS" id="I18.002"/>
<dbReference type="GO" id="GO:0005576">
    <property type="term" value="C:extracellular region"/>
    <property type="evidence" value="ECO:0007669"/>
    <property type="project" value="UniProtKB-SubCell"/>
</dbReference>
<dbReference type="GO" id="GO:0019871">
    <property type="term" value="F:sodium channel inhibitor activity"/>
    <property type="evidence" value="ECO:0007669"/>
    <property type="project" value="InterPro"/>
</dbReference>
<dbReference type="GO" id="GO:0050832">
    <property type="term" value="P:defense response to fungus"/>
    <property type="evidence" value="ECO:0007669"/>
    <property type="project" value="UniProtKB-KW"/>
</dbReference>
<dbReference type="GO" id="GO:0031640">
    <property type="term" value="P:killing of cells of another organism"/>
    <property type="evidence" value="ECO:0007669"/>
    <property type="project" value="UniProtKB-KW"/>
</dbReference>
<dbReference type="Gene3D" id="3.30.30.10">
    <property type="entry name" value="Knottin, scorpion toxin-like"/>
    <property type="match status" value="1"/>
</dbReference>
<dbReference type="InterPro" id="IPR003614">
    <property type="entry name" value="Scorpion_toxin-like"/>
</dbReference>
<dbReference type="InterPro" id="IPR036574">
    <property type="entry name" value="Scorpion_toxin-like_sf"/>
</dbReference>
<dbReference type="InterPro" id="IPR002061">
    <property type="entry name" value="Scorpion_toxinL/defensin"/>
</dbReference>
<dbReference type="Pfam" id="PF00537">
    <property type="entry name" value="Toxin_3"/>
    <property type="match status" value="1"/>
</dbReference>
<dbReference type="SMART" id="SM00505">
    <property type="entry name" value="Knot1"/>
    <property type="match status" value="1"/>
</dbReference>
<dbReference type="SUPFAM" id="SSF57095">
    <property type="entry name" value="Scorpion toxin-like"/>
    <property type="match status" value="1"/>
</dbReference>
<protein>
    <recommendedName>
        <fullName>Defensin-like protein 4</fullName>
    </recommendedName>
    <alternativeName>
        <fullName>RTI</fullName>
    </alternativeName>
    <alternativeName>
        <fullName>Trypsin inhibitor</fullName>
    </alternativeName>
</protein>
<comment type="function">
    <text>Inhibits trypsin and chymotrypsin.</text>
</comment>
<comment type="subcellular location">
    <subcellularLocation>
        <location>Secreted</location>
    </subcellularLocation>
</comment>
<comment type="similarity">
    <text evidence="2">Belongs to the DEFL family. Protease inhibitor I18 (RTI/MTI-2) subfamily.</text>
</comment>
<comment type="caution">
    <text evidence="3">Was initially thought to be a protease inhibitor.</text>
</comment>
<organism>
    <name type="scientific">Brassica napus</name>
    <name type="common">Rape</name>
    <dbReference type="NCBI Taxonomy" id="3708"/>
    <lineage>
        <taxon>Eukaryota</taxon>
        <taxon>Viridiplantae</taxon>
        <taxon>Streptophyta</taxon>
        <taxon>Embryophyta</taxon>
        <taxon>Tracheophyta</taxon>
        <taxon>Spermatophyta</taxon>
        <taxon>Magnoliopsida</taxon>
        <taxon>eudicotyledons</taxon>
        <taxon>Gunneridae</taxon>
        <taxon>Pentapetalae</taxon>
        <taxon>rosids</taxon>
        <taxon>malvids</taxon>
        <taxon>Brassicales</taxon>
        <taxon>Brassicaceae</taxon>
        <taxon>Brassiceae</taxon>
        <taxon>Brassica</taxon>
    </lineage>
</organism>
<reference key="1">
    <citation type="journal article" date="1994" name="FEBS Lett.">
        <title>Purification, inhibitory properties, amino acid sequence and identification of the reactive site of a new serine proteinase inhibitor from oil-rape (Brassica napus) seed.</title>
        <authorList>
            <person name="Ceciliani F."/>
            <person name="Menegatti E."/>
            <person name="Ronchi S."/>
            <person name="Bortolotti F."/>
            <person name="Ascenzi P."/>
            <person name="Palmieri S."/>
        </authorList>
    </citation>
    <scope>PROTEIN SEQUENCE</scope>
    <source>
        <strain>cv. Oleifera</strain>
        <tissue>Seed</tissue>
    </source>
</reference>
<proteinExistence type="evidence at protein level"/>
<feature type="chain" id="PRO_0000221426" description="Defensin-like protein 4">
    <location>
        <begin position="1"/>
        <end position="60"/>
    </location>
</feature>
<feature type="site" description="Reactive bond">
    <location>
        <begin position="20"/>
        <end position="21"/>
    </location>
</feature>
<feature type="disulfide bond" evidence="1">
    <location>
        <begin position="4"/>
        <end position="56"/>
    </location>
</feature>
<feature type="disulfide bond" evidence="1">
    <location>
        <begin position="17"/>
        <end position="41"/>
    </location>
</feature>
<feature type="disulfide bond" evidence="1">
    <location>
        <begin position="26"/>
        <end position="51"/>
    </location>
</feature>
<feature type="disulfide bond" evidence="1">
    <location>
        <begin position="30"/>
        <end position="53"/>
    </location>
</feature>